<dbReference type="EMBL" id="X59300">
    <property type="protein sequence ID" value="CAA41988.1"/>
    <property type="molecule type" value="mRNA"/>
</dbReference>
<dbReference type="EMBL" id="AC102098">
    <property type="status" value="NOT_ANNOTATED_CDS"/>
    <property type="molecule type" value="Genomic_DNA"/>
</dbReference>
<dbReference type="EMBL" id="AC102129">
    <property type="status" value="NOT_ANNOTATED_CDS"/>
    <property type="molecule type" value="Genomic_DNA"/>
</dbReference>
<dbReference type="EMBL" id="AC116146">
    <property type="status" value="NOT_ANNOTATED_CDS"/>
    <property type="molecule type" value="Genomic_DNA"/>
</dbReference>
<dbReference type="EMBL" id="AC134844">
    <property type="status" value="NOT_ANNOTATED_CDS"/>
    <property type="molecule type" value="Genomic_DNA"/>
</dbReference>
<dbReference type="EMBL" id="AC156610">
    <property type="status" value="NOT_ANNOTATED_CDS"/>
    <property type="molecule type" value="Genomic_DNA"/>
</dbReference>
<dbReference type="EMBL" id="AC158550">
    <property type="status" value="NOT_ANNOTATED_CDS"/>
    <property type="molecule type" value="Genomic_DNA"/>
</dbReference>
<dbReference type="EMBL" id="CH466599">
    <property type="protein sequence ID" value="EDL21863.1"/>
    <property type="molecule type" value="Genomic_DNA"/>
</dbReference>
<dbReference type="CCDS" id="CCDS21320.1"/>
<dbReference type="PIR" id="S16915">
    <property type="entry name" value="S16915"/>
</dbReference>
<dbReference type="RefSeq" id="NP_032100.2">
    <property type="nucleotide sequence ID" value="NM_008074.3"/>
</dbReference>
<dbReference type="SMR" id="P27681"/>
<dbReference type="FunCoup" id="P27681">
    <property type="interactions" value="384"/>
</dbReference>
<dbReference type="STRING" id="10090.ENSMUSP00000067632"/>
<dbReference type="ChEMBL" id="CHEMBL2094133"/>
<dbReference type="DrugCentral" id="P27681"/>
<dbReference type="GlyCosmos" id="P27681">
    <property type="glycosylation" value="2 sites, No reported glycans"/>
</dbReference>
<dbReference type="GlyGen" id="P27681">
    <property type="glycosylation" value="2 sites, 1 N-linked glycan (1 site)"/>
</dbReference>
<dbReference type="PhosphoSitePlus" id="P27681"/>
<dbReference type="PaxDb" id="10090-ENSMUSP00000067632"/>
<dbReference type="ProteomicsDB" id="272941"/>
<dbReference type="Antibodypedia" id="5045">
    <property type="antibodies" value="98 antibodies from 18 providers"/>
</dbReference>
<dbReference type="DNASU" id="14407"/>
<dbReference type="Ensembl" id="ENSMUST00000068911.13">
    <property type="protein sequence ID" value="ENSMUSP00000067632.7"/>
    <property type="gene ID" value="ENSMUSG00000055026.14"/>
</dbReference>
<dbReference type="GeneID" id="14407"/>
<dbReference type="KEGG" id="mmu:14407"/>
<dbReference type="UCSC" id="uc009hdz.1">
    <property type="organism name" value="mouse"/>
</dbReference>
<dbReference type="AGR" id="MGI:95624"/>
<dbReference type="CTD" id="2567"/>
<dbReference type="MGI" id="MGI:95624">
    <property type="gene designation" value="Gabrg3"/>
</dbReference>
<dbReference type="VEuPathDB" id="HostDB:ENSMUSG00000055026"/>
<dbReference type="eggNOG" id="KOG3642">
    <property type="taxonomic scope" value="Eukaryota"/>
</dbReference>
<dbReference type="GeneTree" id="ENSGT00940000155607"/>
<dbReference type="HOGENOM" id="CLU_010920_2_0_1"/>
<dbReference type="InParanoid" id="P27681"/>
<dbReference type="OMA" id="PREEMVY"/>
<dbReference type="OrthoDB" id="203862at2759"/>
<dbReference type="PhylomeDB" id="P27681"/>
<dbReference type="TreeFam" id="TF315453"/>
<dbReference type="Reactome" id="R-MMU-977443">
    <property type="pathway name" value="GABA receptor activation"/>
</dbReference>
<dbReference type="BioGRID-ORCS" id="14407">
    <property type="hits" value="3 hits in 79 CRISPR screens"/>
</dbReference>
<dbReference type="ChiTaRS" id="Gabrg3">
    <property type="organism name" value="mouse"/>
</dbReference>
<dbReference type="PRO" id="PR:P27681"/>
<dbReference type="Proteomes" id="UP000000589">
    <property type="component" value="Chromosome 7"/>
</dbReference>
<dbReference type="RNAct" id="P27681">
    <property type="molecule type" value="protein"/>
</dbReference>
<dbReference type="Bgee" id="ENSMUSG00000055026">
    <property type="expression patterns" value="Expressed in epithelium of lens and 69 other cell types or tissues"/>
</dbReference>
<dbReference type="ExpressionAtlas" id="P27681">
    <property type="expression patterns" value="baseline and differential"/>
</dbReference>
<dbReference type="GO" id="GO:0034707">
    <property type="term" value="C:chloride channel complex"/>
    <property type="evidence" value="ECO:0007669"/>
    <property type="project" value="UniProtKB-KW"/>
</dbReference>
<dbReference type="GO" id="GO:0098982">
    <property type="term" value="C:GABA-ergic synapse"/>
    <property type="evidence" value="ECO:0000314"/>
    <property type="project" value="SynGO"/>
</dbReference>
<dbReference type="GO" id="GO:0015630">
    <property type="term" value="C:microtubule cytoskeleton"/>
    <property type="evidence" value="ECO:0007669"/>
    <property type="project" value="Ensembl"/>
</dbReference>
<dbReference type="GO" id="GO:0005730">
    <property type="term" value="C:nucleolus"/>
    <property type="evidence" value="ECO:0007669"/>
    <property type="project" value="Ensembl"/>
</dbReference>
<dbReference type="GO" id="GO:0045211">
    <property type="term" value="C:postsynaptic membrane"/>
    <property type="evidence" value="ECO:0007669"/>
    <property type="project" value="UniProtKB-SubCell"/>
</dbReference>
<dbReference type="GO" id="GO:0097060">
    <property type="term" value="C:synaptic membrane"/>
    <property type="evidence" value="ECO:0000314"/>
    <property type="project" value="SynGO"/>
</dbReference>
<dbReference type="GO" id="GO:0004890">
    <property type="term" value="F:GABA-A receptor activity"/>
    <property type="evidence" value="ECO:0000250"/>
    <property type="project" value="UniProtKB"/>
</dbReference>
<dbReference type="GO" id="GO:0022851">
    <property type="term" value="F:GABA-gated chloride ion channel activity"/>
    <property type="evidence" value="ECO:0000250"/>
    <property type="project" value="UniProtKB"/>
</dbReference>
<dbReference type="GO" id="GO:1904315">
    <property type="term" value="F:transmitter-gated monoatomic ion channel activity involved in regulation of postsynaptic membrane potential"/>
    <property type="evidence" value="ECO:0000314"/>
    <property type="project" value="SynGO"/>
</dbReference>
<dbReference type="GO" id="GO:0007214">
    <property type="term" value="P:gamma-aminobutyric acid signaling pathway"/>
    <property type="evidence" value="ECO:0007669"/>
    <property type="project" value="InterPro"/>
</dbReference>
<dbReference type="GO" id="GO:0009410">
    <property type="term" value="P:response to xenobiotic stimulus"/>
    <property type="evidence" value="ECO:0007669"/>
    <property type="project" value="Ensembl"/>
</dbReference>
<dbReference type="CDD" id="cd19000">
    <property type="entry name" value="LGIC_ECD_GABAAR_G"/>
    <property type="match status" value="1"/>
</dbReference>
<dbReference type="CDD" id="cd19054">
    <property type="entry name" value="LGIC_TM_GABAAR_gamma"/>
    <property type="match status" value="1"/>
</dbReference>
<dbReference type="FunFam" id="1.20.58.390:FF:000006">
    <property type="entry name" value="Putative gamma-aminobutyric acid receptor subunit gamma-2"/>
    <property type="match status" value="1"/>
</dbReference>
<dbReference type="FunFam" id="2.70.170.10:FF:000003">
    <property type="entry name" value="Putative gamma-aminobutyric acid receptor subunit gamma-2"/>
    <property type="match status" value="1"/>
</dbReference>
<dbReference type="Gene3D" id="2.70.170.10">
    <property type="entry name" value="Neurotransmitter-gated ion-channel ligand-binding domain"/>
    <property type="match status" value="1"/>
</dbReference>
<dbReference type="Gene3D" id="1.20.58.390">
    <property type="entry name" value="Neurotransmitter-gated ion-channel transmembrane domain"/>
    <property type="match status" value="1"/>
</dbReference>
<dbReference type="InterPro" id="IPR006028">
    <property type="entry name" value="GABAA/Glycine_rcpt"/>
</dbReference>
<dbReference type="InterPro" id="IPR005440">
    <property type="entry name" value="GABBAg3_rcpt"/>
</dbReference>
<dbReference type="InterPro" id="IPR005437">
    <property type="entry name" value="GABRG-1/4"/>
</dbReference>
<dbReference type="InterPro" id="IPR006202">
    <property type="entry name" value="Neur_chan_lig-bd"/>
</dbReference>
<dbReference type="InterPro" id="IPR036734">
    <property type="entry name" value="Neur_chan_lig-bd_sf"/>
</dbReference>
<dbReference type="InterPro" id="IPR006201">
    <property type="entry name" value="Neur_channel"/>
</dbReference>
<dbReference type="InterPro" id="IPR036719">
    <property type="entry name" value="Neuro-gated_channel_TM_sf"/>
</dbReference>
<dbReference type="InterPro" id="IPR038050">
    <property type="entry name" value="Neuro_actylchol_rec"/>
</dbReference>
<dbReference type="InterPro" id="IPR006029">
    <property type="entry name" value="Neurotrans-gated_channel_TM"/>
</dbReference>
<dbReference type="InterPro" id="IPR018000">
    <property type="entry name" value="Neurotransmitter_ion_chnl_CS"/>
</dbReference>
<dbReference type="NCBIfam" id="TIGR00860">
    <property type="entry name" value="LIC"/>
    <property type="match status" value="1"/>
</dbReference>
<dbReference type="PANTHER" id="PTHR18945">
    <property type="entry name" value="NEUROTRANSMITTER GATED ION CHANNEL"/>
    <property type="match status" value="1"/>
</dbReference>
<dbReference type="Pfam" id="PF02931">
    <property type="entry name" value="Neur_chan_LBD"/>
    <property type="match status" value="1"/>
</dbReference>
<dbReference type="Pfam" id="PF02932">
    <property type="entry name" value="Neur_chan_memb"/>
    <property type="match status" value="1"/>
</dbReference>
<dbReference type="PRINTS" id="PR00253">
    <property type="entry name" value="GABAARECEPTR"/>
</dbReference>
<dbReference type="PRINTS" id="PR01620">
    <property type="entry name" value="GABAARGAMMA"/>
</dbReference>
<dbReference type="PRINTS" id="PR01623">
    <property type="entry name" value="GABAARGAMMA3"/>
</dbReference>
<dbReference type="PRINTS" id="PR00252">
    <property type="entry name" value="NRIONCHANNEL"/>
</dbReference>
<dbReference type="SUPFAM" id="SSF90112">
    <property type="entry name" value="Neurotransmitter-gated ion-channel transmembrane pore"/>
    <property type="match status" value="1"/>
</dbReference>
<dbReference type="SUPFAM" id="SSF63712">
    <property type="entry name" value="Nicotinic receptor ligand binding domain-like"/>
    <property type="match status" value="1"/>
</dbReference>
<dbReference type="PROSITE" id="PS00236">
    <property type="entry name" value="NEUROTR_ION_CHANNEL"/>
    <property type="match status" value="1"/>
</dbReference>
<protein>
    <recommendedName>
        <fullName evidence="5">Gamma-aminobutyric acid receptor subunit gamma-3</fullName>
    </recommendedName>
    <alternativeName>
        <fullName evidence="9">GABA(A) receptor subunit gamma-3</fullName>
        <shortName evidence="1">GABAAR subunit gamma-3</shortName>
    </alternativeName>
</protein>
<gene>
    <name evidence="11" type="primary">Gabrg3</name>
</gene>
<proteinExistence type="evidence at transcript level"/>
<sequence length="467" mass="54334">MAAKLLLLLCLFSGLHARSRRVEEDENEDSPSNQKWVLAPKSQDTDVTLILNKLLREYDKKLRPDIGIKPTVIDVDIYVNSIGPVSSINMEYQIDIFFAQTWTDSRLRFNSTMKILTLNSNMVGLIWIPDTIFRNSKTAEAHWITTPNQLLRIWNDGKILYTLRLTINAECQLQLHNFPMDAHACPLTFSSYGYPKEEMIYRWRKNSVEAADQKSWRLYQFDFMGLRNTTEIVTTSAGDYVVMTIYFELSRRMGYFTIQTYIPCILTVVLSWVSFWIKKDATPARTTLGITTVLTMTTLSTIARKSLPRVSYVTAMDLFVTVCFLFVFAALMEYATLNYYSSCRKPTIRKKKTSLLHPDSTRWIPDRISLQAPSNYSLLDMRPPPPVMITLNNSMYWQEFEDTCVYECLDGKDCQSFFCCYEECKSGSWRRGRIHIDVSELDSYSRVFFPTSFLLFNLVYWVGYLYL</sequence>
<reference key="1">
    <citation type="journal article" date="1991" name="FEBS Lett.">
        <title>A novel gamma subunit of the GABAA receptor identified using the polymerase chain reaction.</title>
        <authorList>
            <person name="Wilson-Shaw D."/>
            <person name="Robinson M."/>
            <person name="Alaljev B."/>
            <person name="Siegel R.E."/>
            <person name="Sikela J.M."/>
        </authorList>
    </citation>
    <scope>NUCLEOTIDE SEQUENCE [MRNA]</scope>
    <scope>TISSUE SPECIFICITY</scope>
    <source>
        <strain>BALB/C C57</strain>
        <tissue>Brain</tissue>
    </source>
</reference>
<reference key="2">
    <citation type="journal article" date="2009" name="PLoS Biol.">
        <title>Lineage-specific biology revealed by a finished genome assembly of the mouse.</title>
        <authorList>
            <person name="Church D.M."/>
            <person name="Goodstadt L."/>
            <person name="Hillier L.W."/>
            <person name="Zody M.C."/>
            <person name="Goldstein S."/>
            <person name="She X."/>
            <person name="Bult C.J."/>
            <person name="Agarwala R."/>
            <person name="Cherry J.L."/>
            <person name="DiCuccio M."/>
            <person name="Hlavina W."/>
            <person name="Kapustin Y."/>
            <person name="Meric P."/>
            <person name="Maglott D."/>
            <person name="Birtle Z."/>
            <person name="Marques A.C."/>
            <person name="Graves T."/>
            <person name="Zhou S."/>
            <person name="Teague B."/>
            <person name="Potamousis K."/>
            <person name="Churas C."/>
            <person name="Place M."/>
            <person name="Herschleb J."/>
            <person name="Runnheim R."/>
            <person name="Forrest D."/>
            <person name="Amos-Landgraf J."/>
            <person name="Schwartz D.C."/>
            <person name="Cheng Z."/>
            <person name="Lindblad-Toh K."/>
            <person name="Eichler E.E."/>
            <person name="Ponting C.P."/>
        </authorList>
    </citation>
    <scope>NUCLEOTIDE SEQUENCE [LARGE SCALE GENOMIC DNA]</scope>
    <source>
        <strain>C57BL/6J</strain>
    </source>
</reference>
<reference key="3">
    <citation type="submission" date="2005-07" db="EMBL/GenBank/DDBJ databases">
        <authorList>
            <person name="Mural R.J."/>
            <person name="Adams M.D."/>
            <person name="Myers E.W."/>
            <person name="Smith H.O."/>
            <person name="Venter J.C."/>
        </authorList>
    </citation>
    <scope>NUCLEOTIDE SEQUENCE [LARGE SCALE GENOMIC DNA]</scope>
</reference>
<name>GBRG3_MOUSE</name>
<feature type="signal peptide" evidence="7">
    <location>
        <begin position="1"/>
        <end position="17"/>
    </location>
</feature>
<feature type="chain" id="PRO_0000000482" description="Gamma-aminobutyric acid receptor subunit gamma-3">
    <location>
        <begin position="18"/>
        <end position="467"/>
    </location>
</feature>
<feature type="topological domain" description="Extracellular" evidence="10">
    <location>
        <begin position="18"/>
        <end position="256"/>
    </location>
</feature>
<feature type="transmembrane region" description="Helical" evidence="7">
    <location>
        <begin position="257"/>
        <end position="277"/>
    </location>
</feature>
<feature type="topological domain" description="Cytoplasmic" evidence="10">
    <location>
        <begin position="278"/>
        <end position="283"/>
    </location>
</feature>
<feature type="transmembrane region" description="Helical" evidence="7">
    <location>
        <begin position="284"/>
        <end position="303"/>
    </location>
</feature>
<feature type="topological domain" description="Extracellular" evidence="10">
    <location>
        <begin position="304"/>
        <end position="311"/>
    </location>
</feature>
<feature type="transmembrane region" description="Helical" evidence="7">
    <location>
        <begin position="312"/>
        <end position="332"/>
    </location>
</feature>
<feature type="topological domain" description="Cytoplasmic" evidence="10">
    <location>
        <begin position="333"/>
        <end position="446"/>
    </location>
</feature>
<feature type="transmembrane region" description="Helical" evidence="7">
    <location>
        <begin position="447"/>
        <end position="467"/>
    </location>
</feature>
<feature type="glycosylation site" description="N-linked (GlcNAc...) asparagine" evidence="7">
    <location>
        <position position="110"/>
    </location>
</feature>
<feature type="glycosylation site" description="N-linked (GlcNAc...) asparagine" evidence="7">
    <location>
        <position position="228"/>
    </location>
</feature>
<feature type="disulfide bond" evidence="4">
    <location>
        <begin position="171"/>
        <end position="185"/>
    </location>
</feature>
<feature type="sequence conflict" description="In Ref. 1; CAA41988." evidence="10" ref="1">
    <original>S</original>
    <variation>P</variation>
    <location>
        <position position="42"/>
    </location>
</feature>
<feature type="sequence conflict" description="In Ref. 1; CAA41988." evidence="10" ref="1">
    <original>V</original>
    <variation>A</variation>
    <location>
        <position position="47"/>
    </location>
</feature>
<feature type="sequence conflict" description="In Ref. 1; CAA41988." evidence="10" ref="1">
    <original>I</original>
    <variation>T</variation>
    <location>
        <position position="115"/>
    </location>
</feature>
<organism>
    <name type="scientific">Mus musculus</name>
    <name type="common">Mouse</name>
    <dbReference type="NCBI Taxonomy" id="10090"/>
    <lineage>
        <taxon>Eukaryota</taxon>
        <taxon>Metazoa</taxon>
        <taxon>Chordata</taxon>
        <taxon>Craniata</taxon>
        <taxon>Vertebrata</taxon>
        <taxon>Euteleostomi</taxon>
        <taxon>Mammalia</taxon>
        <taxon>Eutheria</taxon>
        <taxon>Euarchontoglires</taxon>
        <taxon>Glires</taxon>
        <taxon>Rodentia</taxon>
        <taxon>Myomorpha</taxon>
        <taxon>Muroidea</taxon>
        <taxon>Muridae</taxon>
        <taxon>Murinae</taxon>
        <taxon>Mus</taxon>
        <taxon>Mus</taxon>
    </lineage>
</organism>
<accession>P27681</accession>
<accession>G5E8E8</accession>
<keyword id="KW-1003">Cell membrane</keyword>
<keyword id="KW-0868">Chloride</keyword>
<keyword id="KW-0869">Chloride channel</keyword>
<keyword id="KW-1015">Disulfide bond</keyword>
<keyword id="KW-0325">Glycoprotein</keyword>
<keyword id="KW-0407">Ion channel</keyword>
<keyword id="KW-0406">Ion transport</keyword>
<keyword id="KW-0449">Lipoprotein</keyword>
<keyword id="KW-0472">Membrane</keyword>
<keyword id="KW-0564">Palmitate</keyword>
<keyword id="KW-0628">Postsynaptic cell membrane</keyword>
<keyword id="KW-1185">Reference proteome</keyword>
<keyword id="KW-0732">Signal</keyword>
<keyword id="KW-0770">Synapse</keyword>
<keyword id="KW-0812">Transmembrane</keyword>
<keyword id="KW-1133">Transmembrane helix</keyword>
<keyword id="KW-0813">Transport</keyword>
<comment type="function">
    <text evidence="2 5">Gamma subunit of the heteropentameric ligand-gated chloride channel gated by gamma-aminobutyric acid (GABA), a major inhibitory neurotransmitter in the brain (By similarity). GABA-gated chloride channels, also named GABA(A) receptors (GABAAR), consist of five subunits arranged around a central pore and contain GABA active binding site(s) located at the alpha and beta subunit interface(s) (By similarity). When activated by GABA, GABAARs selectively allow the flow of chloride across the cell membrane down their electrochemical gradient (By similarity).</text>
</comment>
<comment type="catalytic activity">
    <reaction evidence="5">
        <text>chloride(in) = chloride(out)</text>
        <dbReference type="Rhea" id="RHEA:29823"/>
        <dbReference type="ChEBI" id="CHEBI:17996"/>
    </reaction>
</comment>
<comment type="subunit">
    <text evidence="5">Heteropentamer, formed by a combination of alpha (GABRA1-6), beta (GABRB1-3), gamma (GABRG1-3), delta (GABRD), epsilon (GABRE), rho (GABRR1-3), pi (GABRP) and theta (GABRQ) chains, each subunit exhibiting distinct physiological and pharmacological properties.</text>
</comment>
<comment type="subcellular location">
    <subcellularLocation>
        <location evidence="6">Postsynaptic cell membrane</location>
        <topology evidence="7">Multi-pass membrane protein</topology>
    </subcellularLocation>
    <subcellularLocation>
        <location evidence="6">Cell membrane</location>
        <topology evidence="7">Multi-pass membrane protein</topology>
    </subcellularLocation>
</comment>
<comment type="tissue specificity">
    <text evidence="8">Expressed in brain.</text>
</comment>
<comment type="domain">
    <text evidence="2">GABAARs subunits share a common topological structure: a peptide sequence made up of a long extracellular N-terminal, four transmembrane domains, intracellular or cytoplasmic domain located between the third and the fourth transmembrane domains.</text>
</comment>
<comment type="PTM">
    <text evidence="3">May be palmitoylated.</text>
</comment>
<comment type="similarity">
    <text evidence="10">Belongs to the ligand-gated ion channel (TC 1.A.9) family. Gamma-aminobutyric acid receptor (TC 1.A.9.5) subfamily. GABRG3 sub-subfamily.</text>
</comment>
<evidence type="ECO:0000250" key="1">
    <source>
        <dbReference type="UniProtKB" id="P14867"/>
    </source>
</evidence>
<evidence type="ECO:0000250" key="2">
    <source>
        <dbReference type="UniProtKB" id="P18507"/>
    </source>
</evidence>
<evidence type="ECO:0000250" key="3">
    <source>
        <dbReference type="UniProtKB" id="P22723"/>
    </source>
</evidence>
<evidence type="ECO:0000250" key="4">
    <source>
        <dbReference type="UniProtKB" id="P28472"/>
    </source>
</evidence>
<evidence type="ECO:0000250" key="5">
    <source>
        <dbReference type="UniProtKB" id="P28473"/>
    </source>
</evidence>
<evidence type="ECO:0000250" key="6">
    <source>
        <dbReference type="UniProtKB" id="Q99928"/>
    </source>
</evidence>
<evidence type="ECO:0000255" key="7"/>
<evidence type="ECO:0000269" key="8">
    <source>
    </source>
</evidence>
<evidence type="ECO:0000303" key="9">
    <source>
    </source>
</evidence>
<evidence type="ECO:0000305" key="10"/>
<evidence type="ECO:0000312" key="11">
    <source>
        <dbReference type="MGI" id="MGI:95624"/>
    </source>
</evidence>